<organism>
    <name type="scientific">Pongo abelii</name>
    <name type="common">Sumatran orangutan</name>
    <name type="synonym">Pongo pygmaeus abelii</name>
    <dbReference type="NCBI Taxonomy" id="9601"/>
    <lineage>
        <taxon>Eukaryota</taxon>
        <taxon>Metazoa</taxon>
        <taxon>Chordata</taxon>
        <taxon>Craniata</taxon>
        <taxon>Vertebrata</taxon>
        <taxon>Euteleostomi</taxon>
        <taxon>Mammalia</taxon>
        <taxon>Eutheria</taxon>
        <taxon>Euarchontoglires</taxon>
        <taxon>Primates</taxon>
        <taxon>Haplorrhini</taxon>
        <taxon>Catarrhini</taxon>
        <taxon>Hominidae</taxon>
        <taxon>Pongo</taxon>
    </lineage>
</organism>
<dbReference type="EMBL" id="CR857718">
    <property type="protein sequence ID" value="CAH89986.1"/>
    <property type="molecule type" value="mRNA"/>
</dbReference>
<dbReference type="SMR" id="Q5RE21"/>
<dbReference type="FunCoup" id="Q5RE21">
    <property type="interactions" value="3095"/>
</dbReference>
<dbReference type="STRING" id="9601.ENSPPYP00000002443"/>
<dbReference type="eggNOG" id="KOG0101">
    <property type="taxonomic scope" value="Eukaryota"/>
</dbReference>
<dbReference type="InParanoid" id="Q5RE21"/>
<dbReference type="Proteomes" id="UP000001595">
    <property type="component" value="Unplaced"/>
</dbReference>
<dbReference type="GO" id="GO:0005829">
    <property type="term" value="C:cytosol"/>
    <property type="evidence" value="ECO:0000250"/>
    <property type="project" value="UniProtKB"/>
</dbReference>
<dbReference type="GO" id="GO:0005524">
    <property type="term" value="F:ATP binding"/>
    <property type="evidence" value="ECO:0007669"/>
    <property type="project" value="UniProtKB-KW"/>
</dbReference>
<dbReference type="GO" id="GO:0140662">
    <property type="term" value="F:ATP-dependent protein folding chaperone"/>
    <property type="evidence" value="ECO:0007669"/>
    <property type="project" value="InterPro"/>
</dbReference>
<dbReference type="CDD" id="cd10238">
    <property type="entry name" value="ASKHA_NBD_HSP70_HSPA14"/>
    <property type="match status" value="1"/>
</dbReference>
<dbReference type="FunFam" id="2.60.34.10:FF:000013">
    <property type="entry name" value="Heat shock 70 kDa protein 14"/>
    <property type="match status" value="1"/>
</dbReference>
<dbReference type="FunFam" id="3.30.30.30:FF:000008">
    <property type="entry name" value="heat shock 70 kDa protein 14"/>
    <property type="match status" value="1"/>
</dbReference>
<dbReference type="FunFam" id="3.90.640.10:FF:000010">
    <property type="entry name" value="heat shock 70 kDa protein 14"/>
    <property type="match status" value="1"/>
</dbReference>
<dbReference type="FunFam" id="3.30.420.40:FF:000171">
    <property type="entry name" value="Heat shock 70 kDa protein 4"/>
    <property type="match status" value="1"/>
</dbReference>
<dbReference type="FunFam" id="3.30.420.40:FF:000433">
    <property type="entry name" value="Heat shock protein family A (Hsp70) member 14"/>
    <property type="match status" value="1"/>
</dbReference>
<dbReference type="Gene3D" id="3.30.30.30">
    <property type="match status" value="1"/>
</dbReference>
<dbReference type="Gene3D" id="3.30.420.40">
    <property type="match status" value="2"/>
</dbReference>
<dbReference type="Gene3D" id="3.90.640.10">
    <property type="entry name" value="Actin, Chain A, domain 4"/>
    <property type="match status" value="1"/>
</dbReference>
<dbReference type="Gene3D" id="2.60.34.10">
    <property type="entry name" value="Substrate Binding Domain Of DNAk, Chain A, domain 1"/>
    <property type="match status" value="1"/>
</dbReference>
<dbReference type="InterPro" id="IPR043129">
    <property type="entry name" value="ATPase_NBD"/>
</dbReference>
<dbReference type="InterPro" id="IPR018181">
    <property type="entry name" value="Heat_shock_70_CS"/>
</dbReference>
<dbReference type="InterPro" id="IPR029047">
    <property type="entry name" value="HSP70_peptide-bd_sf"/>
</dbReference>
<dbReference type="InterPro" id="IPR013126">
    <property type="entry name" value="Hsp_70_fam"/>
</dbReference>
<dbReference type="InterPro" id="IPR042049">
    <property type="entry name" value="HSPA14_NBD"/>
</dbReference>
<dbReference type="PANTHER" id="PTHR19375">
    <property type="entry name" value="HEAT SHOCK PROTEIN 70KDA"/>
    <property type="match status" value="1"/>
</dbReference>
<dbReference type="Pfam" id="PF00012">
    <property type="entry name" value="HSP70"/>
    <property type="match status" value="1"/>
</dbReference>
<dbReference type="PRINTS" id="PR00301">
    <property type="entry name" value="HEATSHOCK70"/>
</dbReference>
<dbReference type="SUPFAM" id="SSF53067">
    <property type="entry name" value="Actin-like ATPase domain"/>
    <property type="match status" value="2"/>
</dbReference>
<dbReference type="SUPFAM" id="SSF100920">
    <property type="entry name" value="Heat shock protein 70kD (HSP70), peptide-binding domain"/>
    <property type="match status" value="1"/>
</dbReference>
<dbReference type="PROSITE" id="PS01036">
    <property type="entry name" value="HSP70_3"/>
    <property type="match status" value="1"/>
</dbReference>
<reference key="1">
    <citation type="submission" date="2004-11" db="EMBL/GenBank/DDBJ databases">
        <authorList>
            <consortium name="The German cDNA consortium"/>
        </authorList>
    </citation>
    <scope>NUCLEOTIDE SEQUENCE [LARGE SCALE MRNA]</scope>
    <source>
        <tissue>Kidney</tissue>
    </source>
</reference>
<sequence length="509" mass="54845">MAAIGVHLGCTSACVAVYKDGRAGVVANDAGDRVTPAVVAYSENEEIVGLAAKQSRIRNISNTVMKVKQILGRSSNDPQAQKYIVESKCLVIEKNGKLRYEIDTGEETKLVNPEDVARLIFSKMKETAHSVLGSDANDVVITVPFDFGEKQKNALGEAARAAGFNVLRLIHEPSAALLAYGIGQDSPTGKSNILVFKLGGTSLSLSIMEVNSGIYRVLSTNTDDNIGGAHFTETLAQYLASEFQRSFKYDVRGNARAMMKLMNSAEVAKHSLSTLGSANCFLDSLYEGQDFDCNVSRARFELLCSPLFNKCIEAIRGLLDQSGFTADDINKVVLCGGSSRIPKLQQLIKDIFPAVELLNSIPPDEVIPIGAAIEAGILIGKENLLVEDSLMIECSARDILVKGVDESGASRFTVLFPSGTPLPARRQHTLQAPGSISSVCLELYESDGKNSAKEETKFAQVVLQDLDKKENGLRDILAVLTMKRDGSLHVTCTDQETGKCEAISIEVAS</sequence>
<feature type="chain" id="PRO_0000405825" description="Heat shock 70 kDa protein 14">
    <location>
        <begin position="1"/>
        <end position="509"/>
    </location>
</feature>
<accession>Q5RE21</accession>
<name>HSP7E_PONAB</name>
<gene>
    <name type="primary">HSPA14</name>
</gene>
<keyword id="KW-0067">ATP-binding</keyword>
<keyword id="KW-0143">Chaperone</keyword>
<keyword id="KW-0963">Cytoplasm</keyword>
<keyword id="KW-0547">Nucleotide-binding</keyword>
<keyword id="KW-1185">Reference proteome</keyword>
<protein>
    <recommendedName>
        <fullName>Heat shock 70 kDa protein 14</fullName>
    </recommendedName>
</protein>
<proteinExistence type="evidence at transcript level"/>
<comment type="function">
    <text evidence="1">Component of the ribosome-associated complex (RAC), a complex involved in folding or maintaining nascent polypeptides in a folding-competent state. In the RAC complex, binds to the nascent polypeptide chain, while DNAJC2 stimulates its ATPase activity (By similarity).</text>
</comment>
<comment type="subunit">
    <text evidence="1">Component of ribosome-associated complex (RAC), a heterodimer composed of Hsp70/DnaK-type chaperone HSPA14 and Hsp40/DnaJ-type chaperone DNAJC2.</text>
</comment>
<comment type="subcellular location">
    <subcellularLocation>
        <location evidence="1">Cytoplasm</location>
        <location evidence="1">Cytosol</location>
    </subcellularLocation>
</comment>
<comment type="similarity">
    <text evidence="2">Belongs to the heat shock protein 70 family.</text>
</comment>
<evidence type="ECO:0000250" key="1"/>
<evidence type="ECO:0000305" key="2"/>